<sequence length="281" mass="31690">MKNIGININTDKDISRNILDKIFQYIHEECSEAKIKVFYDSKGLDNEESRALDAVMVLGGDGTILGTARALAKYDVPIFGINRGHLGFLAEIELEDCKKAIKNLFKGQYKIEDRIMLKCDLKGIDKKDDFLALNDIVLTKGNLSRIVKYSIYVDDVWYTTFVADGVIVATPTGSTAYSLSAGGPIVYPDLDVLEIAPICPHSLGIRPILLNGNSKINIRVLKKYEDPVLTIDGQRYKKVTVNEVTISKSEYKCRLIKFKDKDYFKILRTKISYRSRECEGE</sequence>
<name>NADK_CLOBL</name>
<keyword id="KW-0067">ATP-binding</keyword>
<keyword id="KW-0963">Cytoplasm</keyword>
<keyword id="KW-0418">Kinase</keyword>
<keyword id="KW-0520">NAD</keyword>
<keyword id="KW-0521">NADP</keyword>
<keyword id="KW-0547">Nucleotide-binding</keyword>
<keyword id="KW-0808">Transferase</keyword>
<evidence type="ECO:0000255" key="1">
    <source>
        <dbReference type="HAMAP-Rule" id="MF_00361"/>
    </source>
</evidence>
<accession>A7GEJ1</accession>
<comment type="function">
    <text evidence="1">Involved in the regulation of the intracellular balance of NAD and NADP, and is a key enzyme in the biosynthesis of NADP. Catalyzes specifically the phosphorylation on 2'-hydroxyl of the adenosine moiety of NAD to yield NADP.</text>
</comment>
<comment type="catalytic activity">
    <reaction evidence="1">
        <text>NAD(+) + ATP = ADP + NADP(+) + H(+)</text>
        <dbReference type="Rhea" id="RHEA:18629"/>
        <dbReference type="ChEBI" id="CHEBI:15378"/>
        <dbReference type="ChEBI" id="CHEBI:30616"/>
        <dbReference type="ChEBI" id="CHEBI:57540"/>
        <dbReference type="ChEBI" id="CHEBI:58349"/>
        <dbReference type="ChEBI" id="CHEBI:456216"/>
        <dbReference type="EC" id="2.7.1.23"/>
    </reaction>
</comment>
<comment type="cofactor">
    <cofactor evidence="1">
        <name>a divalent metal cation</name>
        <dbReference type="ChEBI" id="CHEBI:60240"/>
    </cofactor>
</comment>
<comment type="subcellular location">
    <subcellularLocation>
        <location evidence="1">Cytoplasm</location>
    </subcellularLocation>
</comment>
<comment type="similarity">
    <text evidence="1">Belongs to the NAD kinase family.</text>
</comment>
<organism>
    <name type="scientific">Clostridium botulinum (strain Langeland / NCTC 10281 / Type F)</name>
    <dbReference type="NCBI Taxonomy" id="441772"/>
    <lineage>
        <taxon>Bacteria</taxon>
        <taxon>Bacillati</taxon>
        <taxon>Bacillota</taxon>
        <taxon>Clostridia</taxon>
        <taxon>Eubacteriales</taxon>
        <taxon>Clostridiaceae</taxon>
        <taxon>Clostridium</taxon>
    </lineage>
</organism>
<feature type="chain" id="PRO_1000079482" description="NAD kinase">
    <location>
        <begin position="1"/>
        <end position="281"/>
    </location>
</feature>
<feature type="active site" description="Proton acceptor" evidence="1">
    <location>
        <position position="61"/>
    </location>
</feature>
<feature type="binding site" evidence="1">
    <location>
        <begin position="61"/>
        <end position="62"/>
    </location>
    <ligand>
        <name>NAD(+)</name>
        <dbReference type="ChEBI" id="CHEBI:57540"/>
    </ligand>
</feature>
<feature type="binding site" evidence="1">
    <location>
        <begin position="134"/>
        <end position="135"/>
    </location>
    <ligand>
        <name>NAD(+)</name>
        <dbReference type="ChEBI" id="CHEBI:57540"/>
    </ligand>
</feature>
<feature type="binding site" evidence="1">
    <location>
        <position position="145"/>
    </location>
    <ligand>
        <name>NAD(+)</name>
        <dbReference type="ChEBI" id="CHEBI:57540"/>
    </ligand>
</feature>
<feature type="binding site" evidence="1">
    <location>
        <position position="164"/>
    </location>
    <ligand>
        <name>NAD(+)</name>
        <dbReference type="ChEBI" id="CHEBI:57540"/>
    </ligand>
</feature>
<feature type="binding site" evidence="1">
    <location>
        <begin position="175"/>
        <end position="180"/>
    </location>
    <ligand>
        <name>NAD(+)</name>
        <dbReference type="ChEBI" id="CHEBI:57540"/>
    </ligand>
</feature>
<feature type="binding site" evidence="1">
    <location>
        <position position="234"/>
    </location>
    <ligand>
        <name>NAD(+)</name>
        <dbReference type="ChEBI" id="CHEBI:57540"/>
    </ligand>
</feature>
<reference key="1">
    <citation type="submission" date="2007-06" db="EMBL/GenBank/DDBJ databases">
        <authorList>
            <person name="Brinkac L.M."/>
            <person name="Daugherty S."/>
            <person name="Dodson R.J."/>
            <person name="Madupu R."/>
            <person name="Brown J.L."/>
            <person name="Bruce D."/>
            <person name="Detter C."/>
            <person name="Munk C."/>
            <person name="Smith L.A."/>
            <person name="Smith T.J."/>
            <person name="White O."/>
            <person name="Brettin T.S."/>
        </authorList>
    </citation>
    <scope>NUCLEOTIDE SEQUENCE [LARGE SCALE GENOMIC DNA]</scope>
    <source>
        <strain>Langeland / NCTC 10281 / Type F</strain>
    </source>
</reference>
<protein>
    <recommendedName>
        <fullName evidence="1">NAD kinase</fullName>
        <ecNumber evidence="1">2.7.1.23</ecNumber>
    </recommendedName>
    <alternativeName>
        <fullName evidence="1">ATP-dependent NAD kinase</fullName>
    </alternativeName>
</protein>
<gene>
    <name evidence="1" type="primary">nadK</name>
    <name type="ordered locus">CLI_1943</name>
</gene>
<dbReference type="EC" id="2.7.1.23" evidence="1"/>
<dbReference type="EMBL" id="CP000728">
    <property type="protein sequence ID" value="ABS42236.1"/>
    <property type="molecule type" value="Genomic_DNA"/>
</dbReference>
<dbReference type="RefSeq" id="WP_011986440.1">
    <property type="nucleotide sequence ID" value="NC_009699.1"/>
</dbReference>
<dbReference type="SMR" id="A7GEJ1"/>
<dbReference type="KEGG" id="cbf:CLI_1943"/>
<dbReference type="HOGENOM" id="CLU_008831_0_1_9"/>
<dbReference type="Proteomes" id="UP000002410">
    <property type="component" value="Chromosome"/>
</dbReference>
<dbReference type="GO" id="GO:0005737">
    <property type="term" value="C:cytoplasm"/>
    <property type="evidence" value="ECO:0007669"/>
    <property type="project" value="UniProtKB-SubCell"/>
</dbReference>
<dbReference type="GO" id="GO:0005524">
    <property type="term" value="F:ATP binding"/>
    <property type="evidence" value="ECO:0007669"/>
    <property type="project" value="UniProtKB-KW"/>
</dbReference>
<dbReference type="GO" id="GO:0046872">
    <property type="term" value="F:metal ion binding"/>
    <property type="evidence" value="ECO:0007669"/>
    <property type="project" value="UniProtKB-UniRule"/>
</dbReference>
<dbReference type="GO" id="GO:0051287">
    <property type="term" value="F:NAD binding"/>
    <property type="evidence" value="ECO:0007669"/>
    <property type="project" value="UniProtKB-ARBA"/>
</dbReference>
<dbReference type="GO" id="GO:0003951">
    <property type="term" value="F:NAD+ kinase activity"/>
    <property type="evidence" value="ECO:0007669"/>
    <property type="project" value="UniProtKB-UniRule"/>
</dbReference>
<dbReference type="GO" id="GO:0019674">
    <property type="term" value="P:NAD metabolic process"/>
    <property type="evidence" value="ECO:0007669"/>
    <property type="project" value="InterPro"/>
</dbReference>
<dbReference type="GO" id="GO:0006741">
    <property type="term" value="P:NADP biosynthetic process"/>
    <property type="evidence" value="ECO:0007669"/>
    <property type="project" value="UniProtKB-UniRule"/>
</dbReference>
<dbReference type="FunFam" id="2.60.200.30:FF:000011">
    <property type="entry name" value="NAD kinase"/>
    <property type="match status" value="1"/>
</dbReference>
<dbReference type="Gene3D" id="3.40.50.10330">
    <property type="entry name" value="Probable inorganic polyphosphate/atp-NAD kinase, domain 1"/>
    <property type="match status" value="1"/>
</dbReference>
<dbReference type="Gene3D" id="2.60.200.30">
    <property type="entry name" value="Probable inorganic polyphosphate/atp-NAD kinase, domain 2"/>
    <property type="match status" value="1"/>
</dbReference>
<dbReference type="HAMAP" id="MF_00361">
    <property type="entry name" value="NAD_kinase"/>
    <property type="match status" value="1"/>
</dbReference>
<dbReference type="InterPro" id="IPR017438">
    <property type="entry name" value="ATP-NAD_kinase_N"/>
</dbReference>
<dbReference type="InterPro" id="IPR017437">
    <property type="entry name" value="ATP-NAD_kinase_PpnK-typ_C"/>
</dbReference>
<dbReference type="InterPro" id="IPR016064">
    <property type="entry name" value="NAD/diacylglycerol_kinase_sf"/>
</dbReference>
<dbReference type="InterPro" id="IPR002504">
    <property type="entry name" value="NADK"/>
</dbReference>
<dbReference type="PANTHER" id="PTHR20275">
    <property type="entry name" value="NAD KINASE"/>
    <property type="match status" value="1"/>
</dbReference>
<dbReference type="PANTHER" id="PTHR20275:SF0">
    <property type="entry name" value="NAD KINASE"/>
    <property type="match status" value="1"/>
</dbReference>
<dbReference type="Pfam" id="PF01513">
    <property type="entry name" value="NAD_kinase"/>
    <property type="match status" value="1"/>
</dbReference>
<dbReference type="Pfam" id="PF20143">
    <property type="entry name" value="NAD_kinase_C"/>
    <property type="match status" value="1"/>
</dbReference>
<dbReference type="SUPFAM" id="SSF111331">
    <property type="entry name" value="NAD kinase/diacylglycerol kinase-like"/>
    <property type="match status" value="1"/>
</dbReference>
<proteinExistence type="inferred from homology"/>